<sequence length="44" mass="4814">SCIKHGDFCDGDKDDCQCCRDNGFCSCSGIFGLKWNCRCDVGTT</sequence>
<organism>
    <name type="scientific">Ctenus ornatus</name>
    <name type="common">Brazilian spider</name>
    <name type="synonym">Oligoctenus ornatus</name>
    <dbReference type="NCBI Taxonomy" id="406443"/>
    <lineage>
        <taxon>Eukaryota</taxon>
        <taxon>Metazoa</taxon>
        <taxon>Ecdysozoa</taxon>
        <taxon>Arthropoda</taxon>
        <taxon>Chelicerata</taxon>
        <taxon>Arachnida</taxon>
        <taxon>Araneae</taxon>
        <taxon>Araneomorphae</taxon>
        <taxon>Entelegynae</taxon>
        <taxon>Lycosoidea</taxon>
        <taxon>Ctenidae</taxon>
        <taxon>Oligoctenus</taxon>
    </lineage>
</organism>
<reference evidence="5" key="1">
    <citation type="submission" date="2006-10" db="UniProtKB">
        <title>Protein Oct F28-8 from venom of spider Oligoctenus ornatus has strong sequence similarities with Tx3-4 neurotoxins from Phoneutria spiders.</title>
        <authorList>
            <person name="Richardson M."/>
            <person name="Goncalves J.M."/>
            <person name="Borges M.H."/>
            <person name="Oliveira C.F.B."/>
            <person name="Bemquerer M.P."/>
            <person name="Rates B.A."/>
            <person name="Pimenta A.M.C."/>
            <person name="Cordeiro M.N."/>
        </authorList>
    </citation>
    <scope>PROTEIN SEQUENCE</scope>
    <scope>FUNCTION</scope>
    <scope>SUBCELLULAR LOCATION</scope>
    <scope>TISSUE SPECIFICITY</scope>
    <scope>MASS SPECTROMETRY</scope>
    <source>
        <tissue evidence="2">Venom</tissue>
    </source>
</reference>
<reference evidence="5" key="2">
    <citation type="submission" date="2007-07" db="UniProtKB">
        <authorList>
            <person name="Borges M.H."/>
            <person name="Oliveira C.F.B."/>
            <person name="Goncalves J.M."/>
            <person name="Rates B."/>
            <person name="Santos D.M."/>
            <person name="Pimenta A.M.C."/>
            <person name="Cordeiro M.N."/>
            <person name="Richardson M."/>
        </authorList>
    </citation>
    <scope>PROTEIN SEQUENCE OF 1-26</scope>
    <scope>SUBCELLULAR LOCATION</scope>
    <scope>TISSUE SPECIFICITY</scope>
    <scope>MASS SPECTROMETRY</scope>
    <source>
        <tissue>Venom</tissue>
    </source>
</reference>
<proteinExistence type="evidence at protein level"/>
<accession>P85033</accession>
<keyword id="KW-0108">Calcium channel impairing toxin</keyword>
<keyword id="KW-0903">Direct protein sequencing</keyword>
<keyword id="KW-1015">Disulfide bond</keyword>
<keyword id="KW-0872">Ion channel impairing toxin</keyword>
<keyword id="KW-0960">Knottin</keyword>
<keyword id="KW-0528">Neurotoxin</keyword>
<keyword id="KW-0964">Secreted</keyword>
<keyword id="KW-0800">Toxin</keyword>
<keyword id="KW-1218">Voltage-gated calcium channel impairing toxin</keyword>
<name>TXF28_CTEON</name>
<dbReference type="SMR" id="P85033"/>
<dbReference type="ArachnoServer" id="AS000311">
    <property type="toxin name" value="U4-ctenitoxin-Co1a"/>
</dbReference>
<dbReference type="GO" id="GO:0005576">
    <property type="term" value="C:extracellular region"/>
    <property type="evidence" value="ECO:0007669"/>
    <property type="project" value="UniProtKB-SubCell"/>
</dbReference>
<dbReference type="GO" id="GO:0005246">
    <property type="term" value="F:calcium channel regulator activity"/>
    <property type="evidence" value="ECO:0007669"/>
    <property type="project" value="UniProtKB-KW"/>
</dbReference>
<dbReference type="GO" id="GO:0090729">
    <property type="term" value="F:toxin activity"/>
    <property type="evidence" value="ECO:0007669"/>
    <property type="project" value="UniProtKB-KW"/>
</dbReference>
<dbReference type="InterPro" id="IPR005853">
    <property type="entry name" value="Omega-agatoxin_II/III_CS"/>
</dbReference>
<dbReference type="InterPro" id="IPR013605">
    <property type="entry name" value="Toxin_34"/>
</dbReference>
<dbReference type="Pfam" id="PF08396">
    <property type="entry name" value="Toxin_34"/>
    <property type="match status" value="1"/>
</dbReference>
<dbReference type="PROSITE" id="PS60023">
    <property type="entry name" value="OMEGA_AGA_II_III"/>
    <property type="match status" value="1"/>
</dbReference>
<comment type="function">
    <text evidence="1 2">Omega-agatoxins are antagonists of voltage-gated calcium channels (Cav) (By similarity). Toxic to mice by intracerebroventricular injection.</text>
</comment>
<comment type="subcellular location">
    <subcellularLocation>
        <location evidence="2 3">Secreted</location>
    </subcellularLocation>
</comment>
<comment type="tissue specificity">
    <text evidence="2 3">Expressed by the venom gland.</text>
</comment>
<comment type="domain">
    <text evidence="5">The presence of a 'disulfide through disulfide knot' structurally defines this protein as a knottin.</text>
</comment>
<comment type="mass spectrometry" mass="8592.95" error="0.1" method="Electrospray" evidence="2"/>
<comment type="mass spectrometry" mass="8594.0" error="1.25" method="Electrospray" evidence="3"/>
<comment type="similarity">
    <text evidence="5">Belongs to the neurotoxin 04 (omega-agtx) family. 03 (type II/III omega-agtx) subfamily.</text>
</comment>
<protein>
    <recommendedName>
        <fullName>U4-ctenitoxin-Co1a</fullName>
        <shortName>U4-CNTX-Co1a</shortName>
    </recommendedName>
    <alternativeName>
        <fullName>Neurotoxin Oc M27-11</fullName>
    </alternativeName>
    <alternativeName>
        <fullName>Neurotoxin Oct F28-8</fullName>
    </alternativeName>
</protein>
<feature type="chain" id="PRO_0000262765" description="U4-ctenitoxin-Co1a">
    <location>
        <begin position="1"/>
        <end position="44" status="greater than"/>
    </location>
</feature>
<feature type="disulfide bond" evidence="5">
    <location>
        <begin position="2"/>
        <end position="19"/>
    </location>
</feature>
<feature type="disulfide bond" evidence="5">
    <location>
        <begin position="9"/>
        <end position="25"/>
    </location>
</feature>
<feature type="disulfide bond" evidence="5">
    <location>
        <begin position="18"/>
        <end position="39"/>
    </location>
</feature>
<feature type="disulfide bond" evidence="5">
    <location>
        <begin position="27"/>
        <end position="37"/>
    </location>
</feature>
<feature type="non-terminal residue" evidence="4">
    <location>
        <position position="44"/>
    </location>
</feature>
<evidence type="ECO:0000250" key="1"/>
<evidence type="ECO:0000269" key="2">
    <source ref="1"/>
</evidence>
<evidence type="ECO:0000269" key="3">
    <source ref="2"/>
</evidence>
<evidence type="ECO:0000303" key="4">
    <source ref="1"/>
</evidence>
<evidence type="ECO:0000305" key="5"/>